<feature type="chain" id="PRO_0000267902" description="Large ribosomal subunit protein bL17">
    <location>
        <begin position="1"/>
        <end position="126"/>
    </location>
</feature>
<comment type="subunit">
    <text evidence="1">Part of the 50S ribosomal subunit. Contacts protein L32.</text>
</comment>
<comment type="similarity">
    <text evidence="1">Belongs to the bacterial ribosomal protein bL17 family.</text>
</comment>
<sequence>MRHRYSGRRLNRTSAHRKAMFRNMAVSLIEHEMINTTLPKAKEFRRVAEPLITLAKEDSVANRRLVFSRLRDRKAVTKLFNELGPRYQARPGGYLRILKRGFRAGDNAPMAIVELLERPLPDSQEE</sequence>
<protein>
    <recommendedName>
        <fullName evidence="1">Large ribosomal subunit protein bL17</fullName>
    </recommendedName>
    <alternativeName>
        <fullName evidence="2">50S ribosomal protein L17</fullName>
    </alternativeName>
</protein>
<accession>Q3J8T9</accession>
<organism>
    <name type="scientific">Nitrosococcus oceani (strain ATCC 19707 / BCRC 17464 / JCM 30415 / NCIMB 11848 / C-107)</name>
    <dbReference type="NCBI Taxonomy" id="323261"/>
    <lineage>
        <taxon>Bacteria</taxon>
        <taxon>Pseudomonadati</taxon>
        <taxon>Pseudomonadota</taxon>
        <taxon>Gammaproteobacteria</taxon>
        <taxon>Chromatiales</taxon>
        <taxon>Chromatiaceae</taxon>
        <taxon>Nitrosococcus</taxon>
    </lineage>
</organism>
<keyword id="KW-1185">Reference proteome</keyword>
<keyword id="KW-0687">Ribonucleoprotein</keyword>
<keyword id="KW-0689">Ribosomal protein</keyword>
<dbReference type="EMBL" id="CP000127">
    <property type="protein sequence ID" value="ABA58757.1"/>
    <property type="molecule type" value="Genomic_DNA"/>
</dbReference>
<dbReference type="RefSeq" id="WP_011330912.1">
    <property type="nucleotide sequence ID" value="NC_007484.1"/>
</dbReference>
<dbReference type="SMR" id="Q3J8T9"/>
<dbReference type="FunCoup" id="Q3J8T9">
    <property type="interactions" value="663"/>
</dbReference>
<dbReference type="STRING" id="323261.Noc_2299"/>
<dbReference type="KEGG" id="noc:Noc_2299"/>
<dbReference type="eggNOG" id="COG0203">
    <property type="taxonomic scope" value="Bacteria"/>
</dbReference>
<dbReference type="HOGENOM" id="CLU_074407_2_0_6"/>
<dbReference type="InParanoid" id="Q3J8T9"/>
<dbReference type="Proteomes" id="UP000006838">
    <property type="component" value="Chromosome"/>
</dbReference>
<dbReference type="GO" id="GO:0022625">
    <property type="term" value="C:cytosolic large ribosomal subunit"/>
    <property type="evidence" value="ECO:0007669"/>
    <property type="project" value="TreeGrafter"/>
</dbReference>
<dbReference type="GO" id="GO:0003735">
    <property type="term" value="F:structural constituent of ribosome"/>
    <property type="evidence" value="ECO:0007669"/>
    <property type="project" value="InterPro"/>
</dbReference>
<dbReference type="GO" id="GO:0006412">
    <property type="term" value="P:translation"/>
    <property type="evidence" value="ECO:0007669"/>
    <property type="project" value="UniProtKB-UniRule"/>
</dbReference>
<dbReference type="FunFam" id="3.90.1030.10:FF:000001">
    <property type="entry name" value="50S ribosomal protein L17"/>
    <property type="match status" value="1"/>
</dbReference>
<dbReference type="Gene3D" id="3.90.1030.10">
    <property type="entry name" value="Ribosomal protein L17"/>
    <property type="match status" value="1"/>
</dbReference>
<dbReference type="HAMAP" id="MF_01368">
    <property type="entry name" value="Ribosomal_bL17"/>
    <property type="match status" value="1"/>
</dbReference>
<dbReference type="InterPro" id="IPR000456">
    <property type="entry name" value="Ribosomal_bL17"/>
</dbReference>
<dbReference type="InterPro" id="IPR047859">
    <property type="entry name" value="Ribosomal_bL17_CS"/>
</dbReference>
<dbReference type="InterPro" id="IPR036373">
    <property type="entry name" value="Ribosomal_bL17_sf"/>
</dbReference>
<dbReference type="NCBIfam" id="TIGR00059">
    <property type="entry name" value="L17"/>
    <property type="match status" value="1"/>
</dbReference>
<dbReference type="PANTHER" id="PTHR14413:SF16">
    <property type="entry name" value="LARGE RIBOSOMAL SUBUNIT PROTEIN BL17M"/>
    <property type="match status" value="1"/>
</dbReference>
<dbReference type="PANTHER" id="PTHR14413">
    <property type="entry name" value="RIBOSOMAL PROTEIN L17"/>
    <property type="match status" value="1"/>
</dbReference>
<dbReference type="Pfam" id="PF01196">
    <property type="entry name" value="Ribosomal_L17"/>
    <property type="match status" value="1"/>
</dbReference>
<dbReference type="SUPFAM" id="SSF64263">
    <property type="entry name" value="Prokaryotic ribosomal protein L17"/>
    <property type="match status" value="1"/>
</dbReference>
<dbReference type="PROSITE" id="PS01167">
    <property type="entry name" value="RIBOSOMAL_L17"/>
    <property type="match status" value="1"/>
</dbReference>
<proteinExistence type="inferred from homology"/>
<reference key="1">
    <citation type="journal article" date="2006" name="Appl. Environ. Microbiol.">
        <title>Complete genome sequence of the marine, chemolithoautotrophic, ammonia-oxidizing bacterium Nitrosococcus oceani ATCC 19707.</title>
        <authorList>
            <person name="Klotz M.G."/>
            <person name="Arp D.J."/>
            <person name="Chain P.S.G."/>
            <person name="El-Sheikh A.F."/>
            <person name="Hauser L.J."/>
            <person name="Hommes N.G."/>
            <person name="Larimer F.W."/>
            <person name="Malfatti S.A."/>
            <person name="Norton J.M."/>
            <person name="Poret-Peterson A.T."/>
            <person name="Vergez L.M."/>
            <person name="Ward B.B."/>
        </authorList>
    </citation>
    <scope>NUCLEOTIDE SEQUENCE [LARGE SCALE GENOMIC DNA]</scope>
    <source>
        <strain>ATCC 19707 / BCRC 17464 / JCM 30415 / NCIMB 11848 / C-107</strain>
    </source>
</reference>
<evidence type="ECO:0000255" key="1">
    <source>
        <dbReference type="HAMAP-Rule" id="MF_01368"/>
    </source>
</evidence>
<evidence type="ECO:0000305" key="2"/>
<name>RL17_NITOC</name>
<gene>
    <name evidence="1" type="primary">rplQ</name>
    <name type="ordered locus">Noc_2299</name>
</gene>